<keyword id="KW-0030">Aminoacyl-tRNA synthetase</keyword>
<keyword id="KW-0067">ATP-binding</keyword>
<keyword id="KW-0963">Cytoplasm</keyword>
<keyword id="KW-0436">Ligase</keyword>
<keyword id="KW-0479">Metal-binding</keyword>
<keyword id="KW-0547">Nucleotide-binding</keyword>
<keyword id="KW-0648">Protein biosynthesis</keyword>
<keyword id="KW-0694">RNA-binding</keyword>
<keyword id="KW-0820">tRNA-binding</keyword>
<keyword id="KW-0862">Zinc</keyword>
<gene>
    <name evidence="1" type="primary">thrS</name>
    <name type="ordered locus">CLJ_B3405</name>
</gene>
<comment type="function">
    <text evidence="1">Catalyzes the attachment of threonine to tRNA(Thr) in a two-step reaction: L-threonine is first activated by ATP to form Thr-AMP and then transferred to the acceptor end of tRNA(Thr). Also edits incorrectly charged L-seryl-tRNA(Thr).</text>
</comment>
<comment type="catalytic activity">
    <reaction evidence="1">
        <text>tRNA(Thr) + L-threonine + ATP = L-threonyl-tRNA(Thr) + AMP + diphosphate + H(+)</text>
        <dbReference type="Rhea" id="RHEA:24624"/>
        <dbReference type="Rhea" id="RHEA-COMP:9670"/>
        <dbReference type="Rhea" id="RHEA-COMP:9704"/>
        <dbReference type="ChEBI" id="CHEBI:15378"/>
        <dbReference type="ChEBI" id="CHEBI:30616"/>
        <dbReference type="ChEBI" id="CHEBI:33019"/>
        <dbReference type="ChEBI" id="CHEBI:57926"/>
        <dbReference type="ChEBI" id="CHEBI:78442"/>
        <dbReference type="ChEBI" id="CHEBI:78534"/>
        <dbReference type="ChEBI" id="CHEBI:456215"/>
        <dbReference type="EC" id="6.1.1.3"/>
    </reaction>
</comment>
<comment type="cofactor">
    <cofactor evidence="1">
        <name>Zn(2+)</name>
        <dbReference type="ChEBI" id="CHEBI:29105"/>
    </cofactor>
    <text evidence="1">Binds 1 zinc ion per subunit.</text>
</comment>
<comment type="subunit">
    <text evidence="1">Homodimer.</text>
</comment>
<comment type="subcellular location">
    <subcellularLocation>
        <location evidence="1">Cytoplasm</location>
    </subcellularLocation>
</comment>
<comment type="similarity">
    <text evidence="1">Belongs to the class-II aminoacyl-tRNA synthetase family.</text>
</comment>
<reference key="1">
    <citation type="submission" date="2008-05" db="EMBL/GenBank/DDBJ databases">
        <title>Genome sequence of Clostridium botulinum Ba4 strain 657.</title>
        <authorList>
            <person name="Shrivastava S."/>
            <person name="Brown J.L."/>
            <person name="Bruce D."/>
            <person name="Detter C."/>
            <person name="Munk C."/>
            <person name="Smith L.A."/>
            <person name="Smith T.J."/>
            <person name="Sutton G."/>
            <person name="Brettin T.S."/>
        </authorList>
    </citation>
    <scope>NUCLEOTIDE SEQUENCE [LARGE SCALE GENOMIC DNA]</scope>
    <source>
        <strain>657 / Type Ba4</strain>
    </source>
</reference>
<accession>C3KTK0</accession>
<dbReference type="EC" id="6.1.1.3" evidence="1"/>
<dbReference type="EMBL" id="CP001083">
    <property type="protein sequence ID" value="ACQ54315.1"/>
    <property type="molecule type" value="Genomic_DNA"/>
</dbReference>
<dbReference type="RefSeq" id="WP_003361565.1">
    <property type="nucleotide sequence ID" value="NC_012658.1"/>
</dbReference>
<dbReference type="SMR" id="C3KTK0"/>
<dbReference type="KEGG" id="cbi:CLJ_B3405"/>
<dbReference type="HOGENOM" id="CLU_008554_0_1_9"/>
<dbReference type="Proteomes" id="UP000002333">
    <property type="component" value="Chromosome"/>
</dbReference>
<dbReference type="GO" id="GO:0005737">
    <property type="term" value="C:cytoplasm"/>
    <property type="evidence" value="ECO:0007669"/>
    <property type="project" value="UniProtKB-SubCell"/>
</dbReference>
<dbReference type="GO" id="GO:0005524">
    <property type="term" value="F:ATP binding"/>
    <property type="evidence" value="ECO:0007669"/>
    <property type="project" value="UniProtKB-UniRule"/>
</dbReference>
<dbReference type="GO" id="GO:0140096">
    <property type="term" value="F:catalytic activity, acting on a protein"/>
    <property type="evidence" value="ECO:0007669"/>
    <property type="project" value="UniProtKB-ARBA"/>
</dbReference>
<dbReference type="GO" id="GO:0046872">
    <property type="term" value="F:metal ion binding"/>
    <property type="evidence" value="ECO:0007669"/>
    <property type="project" value="UniProtKB-KW"/>
</dbReference>
<dbReference type="GO" id="GO:0004829">
    <property type="term" value="F:threonine-tRNA ligase activity"/>
    <property type="evidence" value="ECO:0007669"/>
    <property type="project" value="UniProtKB-UniRule"/>
</dbReference>
<dbReference type="GO" id="GO:0016740">
    <property type="term" value="F:transferase activity"/>
    <property type="evidence" value="ECO:0007669"/>
    <property type="project" value="UniProtKB-ARBA"/>
</dbReference>
<dbReference type="GO" id="GO:0000049">
    <property type="term" value="F:tRNA binding"/>
    <property type="evidence" value="ECO:0007669"/>
    <property type="project" value="UniProtKB-KW"/>
</dbReference>
<dbReference type="GO" id="GO:0006435">
    <property type="term" value="P:threonyl-tRNA aminoacylation"/>
    <property type="evidence" value="ECO:0007669"/>
    <property type="project" value="UniProtKB-UniRule"/>
</dbReference>
<dbReference type="CDD" id="cd01667">
    <property type="entry name" value="TGS_ThrRS"/>
    <property type="match status" value="1"/>
</dbReference>
<dbReference type="CDD" id="cd00860">
    <property type="entry name" value="ThrRS_anticodon"/>
    <property type="match status" value="1"/>
</dbReference>
<dbReference type="CDD" id="cd00771">
    <property type="entry name" value="ThrRS_core"/>
    <property type="match status" value="1"/>
</dbReference>
<dbReference type="FunFam" id="3.10.20.30:FF:000005">
    <property type="entry name" value="Threonine--tRNA ligase"/>
    <property type="match status" value="1"/>
</dbReference>
<dbReference type="FunFam" id="3.30.54.20:FF:000002">
    <property type="entry name" value="Threonine--tRNA ligase"/>
    <property type="match status" value="1"/>
</dbReference>
<dbReference type="FunFam" id="3.30.930.10:FF:000002">
    <property type="entry name" value="Threonine--tRNA ligase"/>
    <property type="match status" value="1"/>
</dbReference>
<dbReference type="FunFam" id="3.40.50.800:FF:000001">
    <property type="entry name" value="Threonine--tRNA ligase"/>
    <property type="match status" value="1"/>
</dbReference>
<dbReference type="FunFam" id="3.30.980.10:FF:000005">
    <property type="entry name" value="Threonyl-tRNA synthetase, mitochondrial"/>
    <property type="match status" value="1"/>
</dbReference>
<dbReference type="Gene3D" id="3.10.20.30">
    <property type="match status" value="1"/>
</dbReference>
<dbReference type="Gene3D" id="3.30.54.20">
    <property type="match status" value="1"/>
</dbReference>
<dbReference type="Gene3D" id="3.40.50.800">
    <property type="entry name" value="Anticodon-binding domain"/>
    <property type="match status" value="1"/>
</dbReference>
<dbReference type="Gene3D" id="3.30.930.10">
    <property type="entry name" value="Bira Bifunctional Protein, Domain 2"/>
    <property type="match status" value="1"/>
</dbReference>
<dbReference type="Gene3D" id="3.30.980.10">
    <property type="entry name" value="Threonyl-trna Synthetase, Chain A, domain 2"/>
    <property type="match status" value="1"/>
</dbReference>
<dbReference type="HAMAP" id="MF_00184">
    <property type="entry name" value="Thr_tRNA_synth"/>
    <property type="match status" value="1"/>
</dbReference>
<dbReference type="InterPro" id="IPR002314">
    <property type="entry name" value="aa-tRNA-synt_IIb"/>
</dbReference>
<dbReference type="InterPro" id="IPR006195">
    <property type="entry name" value="aa-tRNA-synth_II"/>
</dbReference>
<dbReference type="InterPro" id="IPR045864">
    <property type="entry name" value="aa-tRNA-synth_II/BPL/LPL"/>
</dbReference>
<dbReference type="InterPro" id="IPR004154">
    <property type="entry name" value="Anticodon-bd"/>
</dbReference>
<dbReference type="InterPro" id="IPR036621">
    <property type="entry name" value="Anticodon-bd_dom_sf"/>
</dbReference>
<dbReference type="InterPro" id="IPR012675">
    <property type="entry name" value="Beta-grasp_dom_sf"/>
</dbReference>
<dbReference type="InterPro" id="IPR004095">
    <property type="entry name" value="TGS"/>
</dbReference>
<dbReference type="InterPro" id="IPR012676">
    <property type="entry name" value="TGS-like"/>
</dbReference>
<dbReference type="InterPro" id="IPR002320">
    <property type="entry name" value="Thr-tRNA-ligase_IIa"/>
</dbReference>
<dbReference type="InterPro" id="IPR018163">
    <property type="entry name" value="Thr/Ala-tRNA-synth_IIc_edit"/>
</dbReference>
<dbReference type="InterPro" id="IPR047246">
    <property type="entry name" value="ThrRS_anticodon"/>
</dbReference>
<dbReference type="InterPro" id="IPR033728">
    <property type="entry name" value="ThrRS_core"/>
</dbReference>
<dbReference type="InterPro" id="IPR012947">
    <property type="entry name" value="tRNA_SAD"/>
</dbReference>
<dbReference type="NCBIfam" id="TIGR00418">
    <property type="entry name" value="thrS"/>
    <property type="match status" value="1"/>
</dbReference>
<dbReference type="PANTHER" id="PTHR11451:SF44">
    <property type="entry name" value="THREONINE--TRNA LIGASE, CHLOROPLASTIC_MITOCHONDRIAL 2"/>
    <property type="match status" value="1"/>
</dbReference>
<dbReference type="PANTHER" id="PTHR11451">
    <property type="entry name" value="THREONINE-TRNA LIGASE"/>
    <property type="match status" value="1"/>
</dbReference>
<dbReference type="Pfam" id="PF03129">
    <property type="entry name" value="HGTP_anticodon"/>
    <property type="match status" value="1"/>
</dbReference>
<dbReference type="Pfam" id="PF02824">
    <property type="entry name" value="TGS"/>
    <property type="match status" value="1"/>
</dbReference>
<dbReference type="Pfam" id="PF00587">
    <property type="entry name" value="tRNA-synt_2b"/>
    <property type="match status" value="1"/>
</dbReference>
<dbReference type="Pfam" id="PF07973">
    <property type="entry name" value="tRNA_SAD"/>
    <property type="match status" value="1"/>
</dbReference>
<dbReference type="PRINTS" id="PR01047">
    <property type="entry name" value="TRNASYNTHTHR"/>
</dbReference>
<dbReference type="SMART" id="SM00863">
    <property type="entry name" value="tRNA_SAD"/>
    <property type="match status" value="1"/>
</dbReference>
<dbReference type="SUPFAM" id="SSF52954">
    <property type="entry name" value="Class II aaRS ABD-related"/>
    <property type="match status" value="1"/>
</dbReference>
<dbReference type="SUPFAM" id="SSF55681">
    <property type="entry name" value="Class II aaRS and biotin synthetases"/>
    <property type="match status" value="1"/>
</dbReference>
<dbReference type="SUPFAM" id="SSF81271">
    <property type="entry name" value="TGS-like"/>
    <property type="match status" value="1"/>
</dbReference>
<dbReference type="SUPFAM" id="SSF55186">
    <property type="entry name" value="ThrRS/AlaRS common domain"/>
    <property type="match status" value="1"/>
</dbReference>
<dbReference type="PROSITE" id="PS50862">
    <property type="entry name" value="AA_TRNA_LIGASE_II"/>
    <property type="match status" value="1"/>
</dbReference>
<dbReference type="PROSITE" id="PS51880">
    <property type="entry name" value="TGS"/>
    <property type="match status" value="1"/>
</dbReference>
<sequence length="635" mass="73311">MIKITLKDGKVMEFEEGIKISDIAMKISPALYKKALAAKIDGETVDLMTELHKDSSLEILTFEDEMGKWALRHTGAHILAQAVKRLYPEVKLAIGPAIDTGFYYDFEADFTFTPEMLEKIEAEIKKIIKENHKLERFELPREEAINLMKEKNEDYKVELIEDLPEGEVISFYKQGDFTDLCAGPHVPSTGKVKSVKLLSLAGAYWRGDENNKMLQRIYGTAFTKKSELDEYLNMLEEAKKRDHRKLGKELDLFSIHEEGPGFPFFHPKGMIIRNILENFWREEHTKAGYQEIRTPLILNEALWHQSGHWDHYKENMYFTNIDDGDYAIKPMNCPGGILVYKNSMHSYRDLPLRLSELGIVHRHELSGALHGLMRVRCFTQDDAHLYMTKEQIKEEIVGIIKLIDKFYKLFGFEYFVELSTRPEDSMGSDEDWEIATNGLREALDSIGKEYRVNEGDGAFYGPKIDFHLKDCIGRTWQCGTIQLDFQMPERFDLSYIGADGEKHRPVMVHRTIYGSVERFIGILIEQYAGAFPTWLAPVQVKLMNITDAQYDYLKKVEEALKENNIRVEIDTRNEKIGYKIREAQLQKVPYMLILGDKEVEAGKVAVRSRKDGDLGAISLEEFIEKIKNEIKVKTN</sequence>
<evidence type="ECO:0000255" key="1">
    <source>
        <dbReference type="HAMAP-Rule" id="MF_00184"/>
    </source>
</evidence>
<evidence type="ECO:0000255" key="2">
    <source>
        <dbReference type="PROSITE-ProRule" id="PRU01228"/>
    </source>
</evidence>
<organism>
    <name type="scientific">Clostridium botulinum (strain 657 / Type Ba4)</name>
    <dbReference type="NCBI Taxonomy" id="515621"/>
    <lineage>
        <taxon>Bacteria</taxon>
        <taxon>Bacillati</taxon>
        <taxon>Bacillota</taxon>
        <taxon>Clostridia</taxon>
        <taxon>Eubacteriales</taxon>
        <taxon>Clostridiaceae</taxon>
        <taxon>Clostridium</taxon>
    </lineage>
</organism>
<name>SYT_CLOB6</name>
<feature type="chain" id="PRO_1000203898" description="Threonine--tRNA ligase">
    <location>
        <begin position="1"/>
        <end position="635"/>
    </location>
</feature>
<feature type="domain" description="TGS" evidence="2">
    <location>
        <begin position="1"/>
        <end position="61"/>
    </location>
</feature>
<feature type="region of interest" description="Catalytic" evidence="1">
    <location>
        <begin position="242"/>
        <end position="532"/>
    </location>
</feature>
<feature type="binding site" evidence="1">
    <location>
        <position position="333"/>
    </location>
    <ligand>
        <name>Zn(2+)</name>
        <dbReference type="ChEBI" id="CHEBI:29105"/>
    </ligand>
</feature>
<feature type="binding site" evidence="1">
    <location>
        <position position="384"/>
    </location>
    <ligand>
        <name>Zn(2+)</name>
        <dbReference type="ChEBI" id="CHEBI:29105"/>
    </ligand>
</feature>
<feature type="binding site" evidence="1">
    <location>
        <position position="509"/>
    </location>
    <ligand>
        <name>Zn(2+)</name>
        <dbReference type="ChEBI" id="CHEBI:29105"/>
    </ligand>
</feature>
<proteinExistence type="inferred from homology"/>
<protein>
    <recommendedName>
        <fullName evidence="1">Threonine--tRNA ligase</fullName>
        <ecNumber evidence="1">6.1.1.3</ecNumber>
    </recommendedName>
    <alternativeName>
        <fullName evidence="1">Threonyl-tRNA synthetase</fullName>
        <shortName evidence="1">ThrRS</shortName>
    </alternativeName>
</protein>